<organism>
    <name type="scientific">Epifagus virginiana</name>
    <name type="common">Beechdrops</name>
    <name type="synonym">Orobanche virginiana</name>
    <dbReference type="NCBI Taxonomy" id="4177"/>
    <lineage>
        <taxon>Eukaryota</taxon>
        <taxon>Viridiplantae</taxon>
        <taxon>Streptophyta</taxon>
        <taxon>Embryophyta</taxon>
        <taxon>Tracheophyta</taxon>
        <taxon>Spermatophyta</taxon>
        <taxon>Magnoliopsida</taxon>
        <taxon>eudicotyledons</taxon>
        <taxon>Gunneridae</taxon>
        <taxon>Pentapetalae</taxon>
        <taxon>asterids</taxon>
        <taxon>lamiids</taxon>
        <taxon>Lamiales</taxon>
        <taxon>Orobanchaceae</taxon>
        <taxon>Orobancheae</taxon>
        <taxon>Epifagus</taxon>
    </lineage>
</organism>
<evidence type="ECO:0000250" key="1"/>
<evidence type="ECO:0000255" key="2">
    <source>
        <dbReference type="HAMAP-Rule" id="MF_01330"/>
    </source>
</evidence>
<protein>
    <recommendedName>
        <fullName evidence="2">Protein Ycf2</fullName>
    </recommendedName>
</protein>
<dbReference type="EMBL" id="M81884">
    <property type="protein sequence ID" value="AAA65867.1"/>
    <property type="molecule type" value="Genomic_DNA"/>
</dbReference>
<dbReference type="EMBL" id="M81884">
    <property type="protein sequence ID" value="AAA65873.1"/>
    <property type="molecule type" value="Genomic_DNA"/>
</dbReference>
<dbReference type="PIR" id="S78398">
    <property type="entry name" value="S78398"/>
</dbReference>
<dbReference type="GO" id="GO:0009532">
    <property type="term" value="C:plastid stroma"/>
    <property type="evidence" value="ECO:0007669"/>
    <property type="project" value="UniProtKB-SubCell"/>
</dbReference>
<dbReference type="GO" id="GO:0005524">
    <property type="term" value="F:ATP binding"/>
    <property type="evidence" value="ECO:0007669"/>
    <property type="project" value="UniProtKB-KW"/>
</dbReference>
<dbReference type="GO" id="GO:0016887">
    <property type="term" value="F:ATP hydrolysis activity"/>
    <property type="evidence" value="ECO:0007669"/>
    <property type="project" value="InterPro"/>
</dbReference>
<dbReference type="CDD" id="cd19505">
    <property type="entry name" value="RecA-like_Ycf2"/>
    <property type="match status" value="1"/>
</dbReference>
<dbReference type="Gene3D" id="3.40.50.300">
    <property type="entry name" value="P-loop containing nucleotide triphosphate hydrolases"/>
    <property type="match status" value="1"/>
</dbReference>
<dbReference type="HAMAP" id="MF_01330">
    <property type="entry name" value="Ycf2"/>
    <property type="match status" value="1"/>
</dbReference>
<dbReference type="InterPro" id="IPR003959">
    <property type="entry name" value="ATPase_AAA_core"/>
</dbReference>
<dbReference type="InterPro" id="IPR027417">
    <property type="entry name" value="P-loop_NTPase"/>
</dbReference>
<dbReference type="InterPro" id="IPR008543">
    <property type="entry name" value="Uncharacterised_Ycf2"/>
</dbReference>
<dbReference type="InterPro" id="IPR056777">
    <property type="entry name" value="Ycf2_N"/>
</dbReference>
<dbReference type="PANTHER" id="PTHR33078:SF51">
    <property type="entry name" value="PROTEIN TIC 214"/>
    <property type="match status" value="1"/>
</dbReference>
<dbReference type="PANTHER" id="PTHR33078">
    <property type="entry name" value="PROTEIN YCF2-RELATED"/>
    <property type="match status" value="1"/>
</dbReference>
<dbReference type="Pfam" id="PF00004">
    <property type="entry name" value="AAA"/>
    <property type="match status" value="1"/>
</dbReference>
<dbReference type="Pfam" id="PF05695">
    <property type="entry name" value="Ycf2"/>
    <property type="match status" value="2"/>
</dbReference>
<dbReference type="SUPFAM" id="SSF52540">
    <property type="entry name" value="P-loop containing nucleoside triphosphate hydrolases"/>
    <property type="match status" value="1"/>
</dbReference>
<reference key="1">
    <citation type="journal article" date="1992" name="Proc. Natl. Acad. Sci. U.S.A.">
        <title>Function and evolution of a minimal plastid genome from a nonphotosynthetic parasitic plant.</title>
        <authorList>
            <person name="Wolfe K.H."/>
            <person name="Morden C.W."/>
            <person name="Palmer J.D."/>
        </authorList>
    </citation>
    <scope>NUCLEOTIDE SEQUENCE [LARGE SCALE GENOMIC DNA]</scope>
</reference>
<reference key="2">
    <citation type="journal article" date="1992" name="J. Mol. Evol.">
        <title>Rapid evolution of the plastid translational apparatus in a nonphotosynthetic plant: loss or accelerated sequence evolution of tRNA and ribosomal protein genes.</title>
        <authorList>
            <person name="Wolfe K.H."/>
            <person name="Morden C.W."/>
            <person name="Ems S.C."/>
            <person name="Palmer J.D."/>
        </authorList>
    </citation>
    <scope>NUCLEOTIDE SEQUENCE [GENOMIC DNA]</scope>
</reference>
<gene>
    <name evidence="2" type="primary">ycf2-A</name>
</gene>
<gene>
    <name evidence="2" type="primary">ycf2-B</name>
</gene>
<accession>P30072</accession>
<sequence length="2216" mass="259513">MKEHPFPYKSWILELREIKNSHYFLDSWTKFNSVGSYINIFSHQERFIKLFDPRILSILLSRNSQGSTSNRYFTIKGVILFVVAVLIYRINNRNMVEIKNIYWRGLLPIPMNSIGPRNDTLEELVGSYNINRFIVSLLYLTKGKNISESFFLNLKESTLVLPITKKCSMPESNWGSRWWRNWTGKNRDYSCKISNETVAGIEILFKEKDKKYLEFIFFYYMDDPIRKDRDWELFDRLSPSKRLNKINFYSGPLFEILVKRRIYYLMSAFREKIPIEVVKGFFKQQKVGSTIQSNDIEHVSHFFSRNKRAISLKNSAQFNMWQFRQDLLVSWGENPHESDFLRNVSRANWIWLNNVWLVNKYRFCRKVRNVSSNIKYKYDSTRSRSSFVQVTDSSQLKGSYYKSSGHFYSVISNEDSEYHTLINQREIKPLKSIFFDPSFLQTEATEIESDQLQKRPSGYSSTLFTEHEKQMINHMLPEEIEEFIGNPTRLVHSFLSDRWSELHLGSNPTERSTRDHKLLKKQQDLSFVPSRRSENKELVNILKIITYLKNTVSIHPISSDPGCDGVLKDEPDMDSSNKISVFNKNTFIYLFHLFHDWNRVGYTLNLHHDFELEERFQEKADLFTLSITEPDLVYHKGFSFSIYMDQKQKMVVFASNNIMEAVNQSRFIRNMIKIQYSTYGYIRNVLHRFFLMNRSDHNLEYEIKRDQIGKDTLNHRTIIKYMINQHLSNFKKSQNKWFNPILFFSRTERSVNRNPDAYRYKRSNGSNNFLEHLEHFVSEQKSHFKFKIVFDLIRFNQYSIDWSAFIDTKDLSKPLRFFLSKLLFFLSNSLPFFCVSFGNIPIHRSEIYIYELKDPNDQLCNQFLEPIDLKIVHLKKRKPFLLGYHGTSRKLKLLITGGRPFLFNKIPRCMIDSFHTINNRSKSFDNTDSYLSMIFHNKDNWLNLVKPFHRSSLISYFYKANRLQFLNNPHNFCFYCNTRLPFYVEKAHIHNYYFTYGQFLNILFIRNKIFSLCVDKKKHAFWGGRDTISPIESQVSKIFIPKNFPQSGDETYNLSQPFHFPSRYDPFVRLIANIYGTPLTEGQIVNLGRTYCQPLSDMNLSDSEGKNFHQYLNFNSNMGLIHTPCSDKYLPSEKRKKRSLCINKYKCVEKGQMYRTFQRKVAFSTLSKWNLFQTYMPWFLTSAGYKYINLIFLDTFSELLSILSSSKKFVSIFNNIMHGSGISWRIINKKRCLPQWNLISEISSKCLHNLLLSEETIRQNNESPLISTHLRSPNVREFLYSILFLLLVVGYLVRTHLLFVSRASSELQTEFKRVKSLMIPSSMIELRKLLNRYPTPASNSFWLKNLFIVAMEQLVYSLEEIRASGGNLLGPAYGVKSICSKNKYFNINLIDLIPNPINRIIFSRNMRHLSHTSKEIYSLIRKRKNVNGDWIDDIIESWVANSDSIDDEEREFLVQFSALTTEKRIYQILLSLTHSDHLSKNDSGYKMIEQPGAIYLRYLVDIHKKYLLNYECNTSCLVERRVFLAHSQTITYSQTSRGTNTLHFPSQGKPFSISLALSPSKGILVIGSIGTGRSFLVKYLATNSYVPFITVFLNKFLDNKPKGFLVDDNDDNDSSDDIYASDDINSDLDTELELITMMNALTMDMMLELDRFFTTLQLELAKAMSPWIIWIPNIHDLDVNESNYLSFGLLVNHLSERCSTNNIIVIASTHIPKKVDPALLAPNKLNTCIKIRRLLIPQQRKHFCTLSYTRGFHLENKIFHTNGFGSITMGSSARDLVALTNEALSISITQNKSILDTNTIRSALHRQTWDLRSGVRSFQDNGILSYQIGRAITQNVLLSNCPIDPISIYMKKKSCTCNGGDYYFYKWYFGLGTSMKKLTILLYLLSCSAGSVAQDLWSLPGPAEKNGITSYGLVENDSDLVRGLLEVEGALVGSSRTEKDCSPFDNDRVIFTLILRPEPGNPLDIIKKGSCSIFDHRFIYEKYESEFEEGYGEGALDPQQIEEDLFNHIVWAPRIWRPWGFIFYCIERPNELGFPYWSRSFRGKRIVYDKDEEGELQENDSELLKSGTVQYQTRDRSSKEQGLLKINQFIWDPADPLFFLLKDQPPGSVFSHRRFFADEEMSKGLLTSQKDPPTSIYKRWFIKNTQEQHFELLINRQRWLRTKSSLSKSNGSFRSNTLFESYQYLSTLFLSNGTLFDKMTKTLLIKRWLFPDEMQM</sequence>
<comment type="function">
    <text>Probable ATPase of unknown function. Its presence in a non-photosynthetic plant (Epifagus virginiana) and experiments in tobacco indicate that it has an essential function which is probably not related to photosynthesis.</text>
</comment>
<comment type="subcellular location">
    <subcellularLocation>
        <location evidence="1">Plastid stroma</location>
    </subcellularLocation>
</comment>
<comment type="similarity">
    <text evidence="2">Belongs to the Ycf2 family.</text>
</comment>
<geneLocation type="non-photosynthetic plastid"/>
<name>YCF2_EPIVI</name>
<keyword id="KW-0067">ATP-binding</keyword>
<keyword id="KW-0547">Nucleotide-binding</keyword>
<keyword id="KW-0934">Plastid</keyword>
<proteinExistence type="inferred from homology"/>
<feature type="chain" id="PRO_0000223054" description="Protein Ycf2">
    <location>
        <begin position="1"/>
        <end position="2216"/>
    </location>
</feature>
<feature type="binding site" evidence="2">
    <location>
        <begin position="1567"/>
        <end position="1574"/>
    </location>
    <ligand>
        <name>ATP</name>
        <dbReference type="ChEBI" id="CHEBI:30616"/>
    </ligand>
</feature>